<keyword id="KW-0378">Hydrolase</keyword>
<keyword id="KW-0460">Magnesium</keyword>
<keyword id="KW-0479">Metal-binding</keyword>
<keyword id="KW-0546">Nucleotide metabolism</keyword>
<evidence type="ECO:0000255" key="1">
    <source>
        <dbReference type="HAMAP-Rule" id="MF_00116"/>
    </source>
</evidence>
<organism>
    <name type="scientific">Mesorhizobium japonicum (strain LMG 29417 / CECT 9101 / MAFF 303099)</name>
    <name type="common">Mesorhizobium loti (strain MAFF 303099)</name>
    <dbReference type="NCBI Taxonomy" id="266835"/>
    <lineage>
        <taxon>Bacteria</taxon>
        <taxon>Pseudomonadati</taxon>
        <taxon>Pseudomonadota</taxon>
        <taxon>Alphaproteobacteria</taxon>
        <taxon>Hyphomicrobiales</taxon>
        <taxon>Phyllobacteriaceae</taxon>
        <taxon>Mesorhizobium</taxon>
    </lineage>
</organism>
<reference key="1">
    <citation type="journal article" date="2000" name="DNA Res.">
        <title>Complete genome structure of the nitrogen-fixing symbiotic bacterium Mesorhizobium loti.</title>
        <authorList>
            <person name="Kaneko T."/>
            <person name="Nakamura Y."/>
            <person name="Sato S."/>
            <person name="Asamizu E."/>
            <person name="Kato T."/>
            <person name="Sasamoto S."/>
            <person name="Watanabe A."/>
            <person name="Idesawa K."/>
            <person name="Ishikawa A."/>
            <person name="Kawashima K."/>
            <person name="Kimura T."/>
            <person name="Kishida Y."/>
            <person name="Kiyokawa C."/>
            <person name="Kohara M."/>
            <person name="Matsumoto M."/>
            <person name="Matsuno A."/>
            <person name="Mochizuki Y."/>
            <person name="Nakayama S."/>
            <person name="Nakazaki N."/>
            <person name="Shimpo S."/>
            <person name="Sugimoto M."/>
            <person name="Takeuchi C."/>
            <person name="Yamada M."/>
            <person name="Tabata S."/>
        </authorList>
    </citation>
    <scope>NUCLEOTIDE SEQUENCE [LARGE SCALE GENOMIC DNA]</scope>
    <source>
        <strain>LMG 29417 / CECT 9101 / MAFF 303099</strain>
    </source>
</reference>
<proteinExistence type="inferred from homology"/>
<feature type="chain" id="PRO_0000182899" description="Deoxyuridine 5'-triphosphate nucleotidohydrolase">
    <location>
        <begin position="1"/>
        <end position="161"/>
    </location>
</feature>
<feature type="binding site" evidence="1">
    <location>
        <begin position="80"/>
        <end position="82"/>
    </location>
    <ligand>
        <name>substrate</name>
    </ligand>
</feature>
<feature type="binding site" evidence="1">
    <location>
        <position position="93"/>
    </location>
    <ligand>
        <name>substrate</name>
    </ligand>
</feature>
<feature type="binding site" evidence="1">
    <location>
        <begin position="97"/>
        <end position="99"/>
    </location>
    <ligand>
        <name>substrate</name>
    </ligand>
</feature>
<feature type="binding site" evidence="1">
    <location>
        <position position="107"/>
    </location>
    <ligand>
        <name>substrate</name>
    </ligand>
</feature>
<name>DUT_RHILO</name>
<sequence length="161" mass="16718">MRAALQNSSVIGPTVGFVRLPHAEGLPLPAYESTGAAGMDLRAAVPDDRPLLILPGKRSLVPTGLILEIPEGMEGQVRPRSGLAFKHGLTVLNSPGTVDSDYRGEVKVLLINLGDEDFAVTRGMRIAQIVFAVVTQAAVEERSLAGGTARGSGGFGSTGTV</sequence>
<gene>
    <name evidence="1" type="primary">dut</name>
    <name type="ordered locus">mll5345</name>
</gene>
<dbReference type="EC" id="3.6.1.23" evidence="1"/>
<dbReference type="EMBL" id="BA000012">
    <property type="protein sequence ID" value="BAB51811.1"/>
    <property type="molecule type" value="Genomic_DNA"/>
</dbReference>
<dbReference type="RefSeq" id="WP_010913150.1">
    <property type="nucleotide sequence ID" value="NC_002678.2"/>
</dbReference>
<dbReference type="SMR" id="Q98C10"/>
<dbReference type="KEGG" id="mlo:mll5345"/>
<dbReference type="PATRIC" id="fig|266835.9.peg.4237"/>
<dbReference type="eggNOG" id="COG0756">
    <property type="taxonomic scope" value="Bacteria"/>
</dbReference>
<dbReference type="HOGENOM" id="CLU_068508_1_0_5"/>
<dbReference type="UniPathway" id="UPA00610">
    <property type="reaction ID" value="UER00666"/>
</dbReference>
<dbReference type="Proteomes" id="UP000000552">
    <property type="component" value="Chromosome"/>
</dbReference>
<dbReference type="GO" id="GO:0004170">
    <property type="term" value="F:dUTP diphosphatase activity"/>
    <property type="evidence" value="ECO:0007669"/>
    <property type="project" value="UniProtKB-UniRule"/>
</dbReference>
<dbReference type="GO" id="GO:0000287">
    <property type="term" value="F:magnesium ion binding"/>
    <property type="evidence" value="ECO:0007669"/>
    <property type="project" value="UniProtKB-UniRule"/>
</dbReference>
<dbReference type="GO" id="GO:0006226">
    <property type="term" value="P:dUMP biosynthetic process"/>
    <property type="evidence" value="ECO:0007669"/>
    <property type="project" value="UniProtKB-UniRule"/>
</dbReference>
<dbReference type="GO" id="GO:0046081">
    <property type="term" value="P:dUTP catabolic process"/>
    <property type="evidence" value="ECO:0007669"/>
    <property type="project" value="InterPro"/>
</dbReference>
<dbReference type="CDD" id="cd07557">
    <property type="entry name" value="trimeric_dUTPase"/>
    <property type="match status" value="1"/>
</dbReference>
<dbReference type="Gene3D" id="2.70.40.10">
    <property type="match status" value="1"/>
</dbReference>
<dbReference type="HAMAP" id="MF_00116">
    <property type="entry name" value="dUTPase_bact"/>
    <property type="match status" value="1"/>
</dbReference>
<dbReference type="InterPro" id="IPR008181">
    <property type="entry name" value="dUTPase"/>
</dbReference>
<dbReference type="InterPro" id="IPR029054">
    <property type="entry name" value="dUTPase-like"/>
</dbReference>
<dbReference type="InterPro" id="IPR036157">
    <property type="entry name" value="dUTPase-like_sf"/>
</dbReference>
<dbReference type="InterPro" id="IPR033704">
    <property type="entry name" value="dUTPase_trimeric"/>
</dbReference>
<dbReference type="NCBIfam" id="TIGR00576">
    <property type="entry name" value="dut"/>
    <property type="match status" value="1"/>
</dbReference>
<dbReference type="NCBIfam" id="NF001862">
    <property type="entry name" value="PRK00601.1"/>
    <property type="match status" value="1"/>
</dbReference>
<dbReference type="PANTHER" id="PTHR11241">
    <property type="entry name" value="DEOXYURIDINE 5'-TRIPHOSPHATE NUCLEOTIDOHYDROLASE"/>
    <property type="match status" value="1"/>
</dbReference>
<dbReference type="PANTHER" id="PTHR11241:SF0">
    <property type="entry name" value="DEOXYURIDINE 5'-TRIPHOSPHATE NUCLEOTIDOHYDROLASE"/>
    <property type="match status" value="1"/>
</dbReference>
<dbReference type="Pfam" id="PF00692">
    <property type="entry name" value="dUTPase"/>
    <property type="match status" value="1"/>
</dbReference>
<dbReference type="SUPFAM" id="SSF51283">
    <property type="entry name" value="dUTPase-like"/>
    <property type="match status" value="1"/>
</dbReference>
<protein>
    <recommendedName>
        <fullName evidence="1">Deoxyuridine 5'-triphosphate nucleotidohydrolase</fullName>
        <shortName evidence="1">dUTPase</shortName>
        <ecNumber evidence="1">3.6.1.23</ecNumber>
    </recommendedName>
    <alternativeName>
        <fullName evidence="1">dUTP pyrophosphatase</fullName>
    </alternativeName>
</protein>
<comment type="function">
    <text evidence="1">This enzyme is involved in nucleotide metabolism: it produces dUMP, the immediate precursor of thymidine nucleotides and it decreases the intracellular concentration of dUTP so that uracil cannot be incorporated into DNA.</text>
</comment>
<comment type="catalytic activity">
    <reaction evidence="1">
        <text>dUTP + H2O = dUMP + diphosphate + H(+)</text>
        <dbReference type="Rhea" id="RHEA:10248"/>
        <dbReference type="ChEBI" id="CHEBI:15377"/>
        <dbReference type="ChEBI" id="CHEBI:15378"/>
        <dbReference type="ChEBI" id="CHEBI:33019"/>
        <dbReference type="ChEBI" id="CHEBI:61555"/>
        <dbReference type="ChEBI" id="CHEBI:246422"/>
        <dbReference type="EC" id="3.6.1.23"/>
    </reaction>
</comment>
<comment type="cofactor">
    <cofactor evidence="1">
        <name>Mg(2+)</name>
        <dbReference type="ChEBI" id="CHEBI:18420"/>
    </cofactor>
</comment>
<comment type="pathway">
    <text evidence="1">Pyrimidine metabolism; dUMP biosynthesis; dUMP from dCTP (dUTP route): step 2/2.</text>
</comment>
<comment type="similarity">
    <text evidence="1">Belongs to the dUTPase family.</text>
</comment>
<accession>Q98C10</accession>